<name>SYT_BURMS</name>
<reference key="1">
    <citation type="journal article" date="2010" name="Genome Biol. Evol.">
        <title>Continuing evolution of Burkholderia mallei through genome reduction and large-scale rearrangements.</title>
        <authorList>
            <person name="Losada L."/>
            <person name="Ronning C.M."/>
            <person name="DeShazer D."/>
            <person name="Woods D."/>
            <person name="Fedorova N."/>
            <person name="Kim H.S."/>
            <person name="Shabalina S.A."/>
            <person name="Pearson T.R."/>
            <person name="Brinkac L."/>
            <person name="Tan P."/>
            <person name="Nandi T."/>
            <person name="Crabtree J."/>
            <person name="Badger J."/>
            <person name="Beckstrom-Sternberg S."/>
            <person name="Saqib M."/>
            <person name="Schutzer S.E."/>
            <person name="Keim P."/>
            <person name="Nierman W.C."/>
        </authorList>
    </citation>
    <scope>NUCLEOTIDE SEQUENCE [LARGE SCALE GENOMIC DNA]</scope>
    <source>
        <strain>SAVP1</strain>
    </source>
</reference>
<evidence type="ECO:0000255" key="1">
    <source>
        <dbReference type="HAMAP-Rule" id="MF_00184"/>
    </source>
</evidence>
<evidence type="ECO:0000255" key="2">
    <source>
        <dbReference type="PROSITE-ProRule" id="PRU01228"/>
    </source>
</evidence>
<protein>
    <recommendedName>
        <fullName evidence="1">Threonine--tRNA ligase</fullName>
        <ecNumber evidence="1">6.1.1.3</ecNumber>
    </recommendedName>
    <alternativeName>
        <fullName evidence="1">Threonyl-tRNA synthetase</fullName>
        <shortName evidence="1">ThrRS</shortName>
    </alternativeName>
</protein>
<keyword id="KW-0030">Aminoacyl-tRNA synthetase</keyword>
<keyword id="KW-0067">ATP-binding</keyword>
<keyword id="KW-0963">Cytoplasm</keyword>
<keyword id="KW-0436">Ligase</keyword>
<keyword id="KW-0479">Metal-binding</keyword>
<keyword id="KW-0547">Nucleotide-binding</keyword>
<keyword id="KW-0648">Protein biosynthesis</keyword>
<keyword id="KW-0694">RNA-binding</keyword>
<keyword id="KW-0820">tRNA-binding</keyword>
<keyword id="KW-0862">Zinc</keyword>
<feature type="chain" id="PRO_1000020354" description="Threonine--tRNA ligase">
    <location>
        <begin position="1"/>
        <end position="635"/>
    </location>
</feature>
<feature type="domain" description="TGS" evidence="2">
    <location>
        <begin position="1"/>
        <end position="61"/>
    </location>
</feature>
<feature type="region of interest" description="Catalytic" evidence="1">
    <location>
        <begin position="242"/>
        <end position="533"/>
    </location>
</feature>
<feature type="binding site" evidence="1">
    <location>
        <position position="333"/>
    </location>
    <ligand>
        <name>Zn(2+)</name>
        <dbReference type="ChEBI" id="CHEBI:29105"/>
    </ligand>
</feature>
<feature type="binding site" evidence="1">
    <location>
        <position position="384"/>
    </location>
    <ligand>
        <name>Zn(2+)</name>
        <dbReference type="ChEBI" id="CHEBI:29105"/>
    </ligand>
</feature>
<feature type="binding site" evidence="1">
    <location>
        <position position="510"/>
    </location>
    <ligand>
        <name>Zn(2+)</name>
        <dbReference type="ChEBI" id="CHEBI:29105"/>
    </ligand>
</feature>
<accession>A1V3R3</accession>
<sequence>MVSIRLPDGSVRQYEHPVTVAEVAASIGPGLAKAALGGKLDGELVDTSALIDRDASLAIVTDKDADGLDIIRHSTAHLLAYAVKELHPDAQVTIGPVIDNGFYYDFSYHRPFTPEDLEAIEKRMQELAKRDEPVTRRVVSRDEAVSYFRSIGEKYKAEIIESIPASDEIKLYSHGSFTDLCRGPHVPSTGKLKVFKLMKVAGAYWRGDSKNEQLQRIYGTAWTRKEDQDAYLHMLEEAEKRDHRKLGKQLDLFHIQEEAPGMVFWHPKGWTLWQQVEQYMRRRLDAAGYLEIKTPMIMDRSLWEASGHWQNYRENMFTTESEKRDYAIKPMNCPGHVQVFKHGLRSYRDLPLRYAEFGSCHRNEASGALHGLMRVRGFVQDDAHIFCTEDQINSEAIAFNKLAMSVYEDFGFDRIDIKLSLRPEQRMGSDETWDHAEEGLRNALKACGLEWEELPGEGAFYGPKIEYHIKDALGRSWQCGTLQLDMMLPERLGAEYVAEDNSRRRPVMLHRAIVGSMERFLGILIEHHAGAMPVWLAPAHAVVLNIAESQAEYARTVAQSLQKQGLRVSADLRNEKISYKIREHTLEKVPYLLVVGDKEREAQTVAVRARGGVDLGVMPVEAFVERLREDIQAFK</sequence>
<comment type="function">
    <text evidence="1">Catalyzes the attachment of threonine to tRNA(Thr) in a two-step reaction: L-threonine is first activated by ATP to form Thr-AMP and then transferred to the acceptor end of tRNA(Thr). Also edits incorrectly charged L-seryl-tRNA(Thr).</text>
</comment>
<comment type="catalytic activity">
    <reaction evidence="1">
        <text>tRNA(Thr) + L-threonine + ATP = L-threonyl-tRNA(Thr) + AMP + diphosphate + H(+)</text>
        <dbReference type="Rhea" id="RHEA:24624"/>
        <dbReference type="Rhea" id="RHEA-COMP:9670"/>
        <dbReference type="Rhea" id="RHEA-COMP:9704"/>
        <dbReference type="ChEBI" id="CHEBI:15378"/>
        <dbReference type="ChEBI" id="CHEBI:30616"/>
        <dbReference type="ChEBI" id="CHEBI:33019"/>
        <dbReference type="ChEBI" id="CHEBI:57926"/>
        <dbReference type="ChEBI" id="CHEBI:78442"/>
        <dbReference type="ChEBI" id="CHEBI:78534"/>
        <dbReference type="ChEBI" id="CHEBI:456215"/>
        <dbReference type="EC" id="6.1.1.3"/>
    </reaction>
</comment>
<comment type="cofactor">
    <cofactor evidence="1">
        <name>Zn(2+)</name>
        <dbReference type="ChEBI" id="CHEBI:29105"/>
    </cofactor>
    <text evidence="1">Binds 1 zinc ion per subunit.</text>
</comment>
<comment type="subunit">
    <text evidence="1">Homodimer.</text>
</comment>
<comment type="subcellular location">
    <subcellularLocation>
        <location evidence="1">Cytoplasm</location>
    </subcellularLocation>
</comment>
<comment type="similarity">
    <text evidence="1">Belongs to the class-II aminoacyl-tRNA synthetase family.</text>
</comment>
<proteinExistence type="inferred from homology"/>
<gene>
    <name evidence="1" type="primary">thrS</name>
    <name type="ordered locus">BMASAVP1_A1539</name>
</gene>
<organism>
    <name type="scientific">Burkholderia mallei (strain SAVP1)</name>
    <dbReference type="NCBI Taxonomy" id="320388"/>
    <lineage>
        <taxon>Bacteria</taxon>
        <taxon>Pseudomonadati</taxon>
        <taxon>Pseudomonadota</taxon>
        <taxon>Betaproteobacteria</taxon>
        <taxon>Burkholderiales</taxon>
        <taxon>Burkholderiaceae</taxon>
        <taxon>Burkholderia</taxon>
        <taxon>pseudomallei group</taxon>
    </lineage>
</organism>
<dbReference type="EC" id="6.1.1.3" evidence="1"/>
<dbReference type="EMBL" id="CP000526">
    <property type="protein sequence ID" value="ABM52129.1"/>
    <property type="molecule type" value="Genomic_DNA"/>
</dbReference>
<dbReference type="RefSeq" id="WP_004191232.1">
    <property type="nucleotide sequence ID" value="NC_008785.1"/>
</dbReference>
<dbReference type="SMR" id="A1V3R3"/>
<dbReference type="GeneID" id="93060046"/>
<dbReference type="KEGG" id="bmv:BMASAVP1_A1539"/>
<dbReference type="HOGENOM" id="CLU_008554_0_1_4"/>
<dbReference type="GO" id="GO:0005829">
    <property type="term" value="C:cytosol"/>
    <property type="evidence" value="ECO:0007669"/>
    <property type="project" value="TreeGrafter"/>
</dbReference>
<dbReference type="GO" id="GO:0005524">
    <property type="term" value="F:ATP binding"/>
    <property type="evidence" value="ECO:0007669"/>
    <property type="project" value="UniProtKB-UniRule"/>
</dbReference>
<dbReference type="GO" id="GO:0046872">
    <property type="term" value="F:metal ion binding"/>
    <property type="evidence" value="ECO:0007669"/>
    <property type="project" value="UniProtKB-KW"/>
</dbReference>
<dbReference type="GO" id="GO:0004829">
    <property type="term" value="F:threonine-tRNA ligase activity"/>
    <property type="evidence" value="ECO:0007669"/>
    <property type="project" value="UniProtKB-UniRule"/>
</dbReference>
<dbReference type="GO" id="GO:0000049">
    <property type="term" value="F:tRNA binding"/>
    <property type="evidence" value="ECO:0007669"/>
    <property type="project" value="UniProtKB-KW"/>
</dbReference>
<dbReference type="GO" id="GO:0006435">
    <property type="term" value="P:threonyl-tRNA aminoacylation"/>
    <property type="evidence" value="ECO:0007669"/>
    <property type="project" value="UniProtKB-UniRule"/>
</dbReference>
<dbReference type="CDD" id="cd01667">
    <property type="entry name" value="TGS_ThrRS"/>
    <property type="match status" value="1"/>
</dbReference>
<dbReference type="CDD" id="cd00860">
    <property type="entry name" value="ThrRS_anticodon"/>
    <property type="match status" value="1"/>
</dbReference>
<dbReference type="CDD" id="cd00771">
    <property type="entry name" value="ThrRS_core"/>
    <property type="match status" value="1"/>
</dbReference>
<dbReference type="FunFam" id="3.10.20.30:FF:000005">
    <property type="entry name" value="Threonine--tRNA ligase"/>
    <property type="match status" value="1"/>
</dbReference>
<dbReference type="FunFam" id="3.30.54.20:FF:000002">
    <property type="entry name" value="Threonine--tRNA ligase"/>
    <property type="match status" value="1"/>
</dbReference>
<dbReference type="FunFam" id="3.30.930.10:FF:000002">
    <property type="entry name" value="Threonine--tRNA ligase"/>
    <property type="match status" value="1"/>
</dbReference>
<dbReference type="FunFam" id="3.40.50.800:FF:000001">
    <property type="entry name" value="Threonine--tRNA ligase"/>
    <property type="match status" value="1"/>
</dbReference>
<dbReference type="FunFam" id="3.30.980.10:FF:000005">
    <property type="entry name" value="Threonyl-tRNA synthetase, mitochondrial"/>
    <property type="match status" value="1"/>
</dbReference>
<dbReference type="Gene3D" id="3.10.20.30">
    <property type="match status" value="1"/>
</dbReference>
<dbReference type="Gene3D" id="3.30.54.20">
    <property type="match status" value="1"/>
</dbReference>
<dbReference type="Gene3D" id="3.40.50.800">
    <property type="entry name" value="Anticodon-binding domain"/>
    <property type="match status" value="1"/>
</dbReference>
<dbReference type="Gene3D" id="3.30.930.10">
    <property type="entry name" value="Bira Bifunctional Protein, Domain 2"/>
    <property type="match status" value="1"/>
</dbReference>
<dbReference type="Gene3D" id="3.30.980.10">
    <property type="entry name" value="Threonyl-trna Synthetase, Chain A, domain 2"/>
    <property type="match status" value="1"/>
</dbReference>
<dbReference type="HAMAP" id="MF_00184">
    <property type="entry name" value="Thr_tRNA_synth"/>
    <property type="match status" value="1"/>
</dbReference>
<dbReference type="InterPro" id="IPR002314">
    <property type="entry name" value="aa-tRNA-synt_IIb"/>
</dbReference>
<dbReference type="InterPro" id="IPR006195">
    <property type="entry name" value="aa-tRNA-synth_II"/>
</dbReference>
<dbReference type="InterPro" id="IPR045864">
    <property type="entry name" value="aa-tRNA-synth_II/BPL/LPL"/>
</dbReference>
<dbReference type="InterPro" id="IPR004154">
    <property type="entry name" value="Anticodon-bd"/>
</dbReference>
<dbReference type="InterPro" id="IPR036621">
    <property type="entry name" value="Anticodon-bd_dom_sf"/>
</dbReference>
<dbReference type="InterPro" id="IPR012675">
    <property type="entry name" value="Beta-grasp_dom_sf"/>
</dbReference>
<dbReference type="InterPro" id="IPR004095">
    <property type="entry name" value="TGS"/>
</dbReference>
<dbReference type="InterPro" id="IPR012676">
    <property type="entry name" value="TGS-like"/>
</dbReference>
<dbReference type="InterPro" id="IPR002320">
    <property type="entry name" value="Thr-tRNA-ligase_IIa"/>
</dbReference>
<dbReference type="InterPro" id="IPR018163">
    <property type="entry name" value="Thr/Ala-tRNA-synth_IIc_edit"/>
</dbReference>
<dbReference type="InterPro" id="IPR047246">
    <property type="entry name" value="ThrRS_anticodon"/>
</dbReference>
<dbReference type="InterPro" id="IPR033728">
    <property type="entry name" value="ThrRS_core"/>
</dbReference>
<dbReference type="InterPro" id="IPR012947">
    <property type="entry name" value="tRNA_SAD"/>
</dbReference>
<dbReference type="NCBIfam" id="TIGR00418">
    <property type="entry name" value="thrS"/>
    <property type="match status" value="1"/>
</dbReference>
<dbReference type="PANTHER" id="PTHR11451:SF44">
    <property type="entry name" value="THREONINE--TRNA LIGASE, CHLOROPLASTIC_MITOCHONDRIAL 2"/>
    <property type="match status" value="1"/>
</dbReference>
<dbReference type="PANTHER" id="PTHR11451">
    <property type="entry name" value="THREONINE-TRNA LIGASE"/>
    <property type="match status" value="1"/>
</dbReference>
<dbReference type="Pfam" id="PF03129">
    <property type="entry name" value="HGTP_anticodon"/>
    <property type="match status" value="1"/>
</dbReference>
<dbReference type="Pfam" id="PF02824">
    <property type="entry name" value="TGS"/>
    <property type="match status" value="1"/>
</dbReference>
<dbReference type="Pfam" id="PF00587">
    <property type="entry name" value="tRNA-synt_2b"/>
    <property type="match status" value="1"/>
</dbReference>
<dbReference type="Pfam" id="PF07973">
    <property type="entry name" value="tRNA_SAD"/>
    <property type="match status" value="1"/>
</dbReference>
<dbReference type="PRINTS" id="PR01047">
    <property type="entry name" value="TRNASYNTHTHR"/>
</dbReference>
<dbReference type="SMART" id="SM00863">
    <property type="entry name" value="tRNA_SAD"/>
    <property type="match status" value="1"/>
</dbReference>
<dbReference type="SUPFAM" id="SSF52954">
    <property type="entry name" value="Class II aaRS ABD-related"/>
    <property type="match status" value="1"/>
</dbReference>
<dbReference type="SUPFAM" id="SSF55681">
    <property type="entry name" value="Class II aaRS and biotin synthetases"/>
    <property type="match status" value="1"/>
</dbReference>
<dbReference type="SUPFAM" id="SSF81271">
    <property type="entry name" value="TGS-like"/>
    <property type="match status" value="1"/>
</dbReference>
<dbReference type="SUPFAM" id="SSF55186">
    <property type="entry name" value="ThrRS/AlaRS common domain"/>
    <property type="match status" value="1"/>
</dbReference>
<dbReference type="PROSITE" id="PS50862">
    <property type="entry name" value="AA_TRNA_LIGASE_II"/>
    <property type="match status" value="1"/>
</dbReference>
<dbReference type="PROSITE" id="PS51880">
    <property type="entry name" value="TGS"/>
    <property type="match status" value="1"/>
</dbReference>